<organism>
    <name type="scientific">Arabidopsis thaliana</name>
    <name type="common">Mouse-ear cress</name>
    <dbReference type="NCBI Taxonomy" id="3702"/>
    <lineage>
        <taxon>Eukaryota</taxon>
        <taxon>Viridiplantae</taxon>
        <taxon>Streptophyta</taxon>
        <taxon>Embryophyta</taxon>
        <taxon>Tracheophyta</taxon>
        <taxon>Spermatophyta</taxon>
        <taxon>Magnoliopsida</taxon>
        <taxon>eudicotyledons</taxon>
        <taxon>Gunneridae</taxon>
        <taxon>Pentapetalae</taxon>
        <taxon>rosids</taxon>
        <taxon>malvids</taxon>
        <taxon>Brassicales</taxon>
        <taxon>Brassicaceae</taxon>
        <taxon>Camelineae</taxon>
        <taxon>Arabidopsis</taxon>
    </lineage>
</organism>
<proteinExistence type="evidence at transcript level"/>
<evidence type="ECO:0000255" key="1">
    <source>
        <dbReference type="HAMAP-Rule" id="MF_03137"/>
    </source>
</evidence>
<evidence type="ECO:0000305" key="2"/>
<keyword id="KW-0342">GTP-binding</keyword>
<keyword id="KW-0378">Hydrolase</keyword>
<keyword id="KW-0472">Membrane</keyword>
<keyword id="KW-0496">Mitochondrion</keyword>
<keyword id="KW-0999">Mitochondrion inner membrane</keyword>
<keyword id="KW-0547">Nucleotide-binding</keyword>
<keyword id="KW-0648">Protein biosynthesis</keyword>
<keyword id="KW-1185">Reference proteome</keyword>
<comment type="function">
    <text evidence="1">Promotes mitochondrial protein synthesis. May act as a fidelity factor of the translation reaction, by catalyzing a one-codon backward translocation of tRNAs on improperly translocated ribosomes. Binds to mitochondrial ribosomes in a GTP-dependent manner.</text>
</comment>
<comment type="catalytic activity">
    <reaction evidence="1">
        <text>GTP + H2O = GDP + phosphate + H(+)</text>
        <dbReference type="Rhea" id="RHEA:19669"/>
        <dbReference type="ChEBI" id="CHEBI:15377"/>
        <dbReference type="ChEBI" id="CHEBI:15378"/>
        <dbReference type="ChEBI" id="CHEBI:37565"/>
        <dbReference type="ChEBI" id="CHEBI:43474"/>
        <dbReference type="ChEBI" id="CHEBI:58189"/>
    </reaction>
</comment>
<comment type="subcellular location">
    <subcellularLocation>
        <location evidence="1">Mitochondrion inner membrane</location>
        <topology evidence="1">Peripheral membrane protein</topology>
        <orientation evidence="1">Matrix side</orientation>
    </subcellularLocation>
</comment>
<comment type="miscellaneous">
    <text evidence="1">This protein may be expected to contain an N-terminal transit peptide but none has been predicted.</text>
</comment>
<comment type="similarity">
    <text evidence="2">Belongs to the TRAFAC class translation factor GTPase superfamily. Classic translation factor GTPase family. LepA subfamily.</text>
</comment>
<reference key="1">
    <citation type="journal article" date="1998" name="DNA Res.">
        <title>Structural analysis of Arabidopsis thaliana chromosome 5. IV. Sequence features of the regions of 1,456,315 bp covered by nineteen physically assigned P1 and TAC clones.</title>
        <authorList>
            <person name="Sato S."/>
            <person name="Kaneko T."/>
            <person name="Kotani H."/>
            <person name="Nakamura Y."/>
            <person name="Asamizu E."/>
            <person name="Miyajima N."/>
            <person name="Tabata S."/>
        </authorList>
    </citation>
    <scope>NUCLEOTIDE SEQUENCE [LARGE SCALE GENOMIC DNA]</scope>
    <source>
        <strain>cv. Columbia</strain>
    </source>
</reference>
<reference key="2">
    <citation type="journal article" date="2017" name="Plant J.">
        <title>Araport11: a complete reannotation of the Arabidopsis thaliana reference genome.</title>
        <authorList>
            <person name="Cheng C.Y."/>
            <person name="Krishnakumar V."/>
            <person name="Chan A.P."/>
            <person name="Thibaud-Nissen F."/>
            <person name="Schobel S."/>
            <person name="Town C.D."/>
        </authorList>
    </citation>
    <scope>GENOME REANNOTATION</scope>
    <source>
        <strain>cv. Columbia</strain>
    </source>
</reference>
<reference key="3">
    <citation type="submission" date="2004-12" db="EMBL/GenBank/DDBJ databases">
        <title>Arabidopsis ORF clones.</title>
        <authorList>
            <person name="Shinn P."/>
            <person name="Chen H."/>
            <person name="Cheuk R.F."/>
            <person name="Kim C.J."/>
            <person name="Ecker J.R."/>
        </authorList>
    </citation>
    <scope>NUCLEOTIDE SEQUENCE [LARGE SCALE MRNA]</scope>
    <source>
        <strain>cv. Columbia</strain>
    </source>
</reference>
<accession>Q9FLE4</accession>
<gene>
    <name type="ordered locus">At5g39900</name>
    <name type="ORF">MYH19.60</name>
</gene>
<feature type="chain" id="PRO_0000402843" description="Translation factor GUF1 homolog, mitochondrial">
    <location>
        <begin position="1"/>
        <end position="663"/>
    </location>
</feature>
<feature type="domain" description="tr-type G">
    <location>
        <begin position="64"/>
        <end position="250"/>
    </location>
</feature>
<feature type="binding site" evidence="1">
    <location>
        <begin position="73"/>
        <end position="80"/>
    </location>
    <ligand>
        <name>GTP</name>
        <dbReference type="ChEBI" id="CHEBI:37565"/>
    </ligand>
</feature>
<feature type="binding site" evidence="1">
    <location>
        <begin position="143"/>
        <end position="147"/>
    </location>
    <ligand>
        <name>GTP</name>
        <dbReference type="ChEBI" id="CHEBI:37565"/>
    </ligand>
</feature>
<feature type="binding site" evidence="1">
    <location>
        <begin position="197"/>
        <end position="200"/>
    </location>
    <ligand>
        <name>GTP</name>
        <dbReference type="ChEBI" id="CHEBI:37565"/>
    </ligand>
</feature>
<name>GUF1_ARATH</name>
<dbReference type="EC" id="3.6.5.-"/>
<dbReference type="EMBL" id="AB010077">
    <property type="protein sequence ID" value="BAB10215.1"/>
    <property type="molecule type" value="Genomic_DNA"/>
</dbReference>
<dbReference type="EMBL" id="CP002688">
    <property type="protein sequence ID" value="AED94489.1"/>
    <property type="molecule type" value="Genomic_DNA"/>
</dbReference>
<dbReference type="EMBL" id="BT020385">
    <property type="protein sequence ID" value="AAV91331.1"/>
    <property type="molecule type" value="mRNA"/>
</dbReference>
<dbReference type="EMBL" id="BT020455">
    <property type="protein sequence ID" value="AAW30033.1"/>
    <property type="molecule type" value="mRNA"/>
</dbReference>
<dbReference type="RefSeq" id="NP_198806.2">
    <property type="nucleotide sequence ID" value="NM_123353.4"/>
</dbReference>
<dbReference type="SMR" id="Q9FLE4"/>
<dbReference type="FunCoup" id="Q9FLE4">
    <property type="interactions" value="3650"/>
</dbReference>
<dbReference type="STRING" id="3702.Q9FLE4"/>
<dbReference type="PaxDb" id="3702-AT5G39900.1"/>
<dbReference type="ProteomicsDB" id="247264"/>
<dbReference type="EnsemblPlants" id="AT5G39900.1">
    <property type="protein sequence ID" value="AT5G39900.1"/>
    <property type="gene ID" value="AT5G39900"/>
</dbReference>
<dbReference type="GeneID" id="833987"/>
<dbReference type="Gramene" id="AT5G39900.1">
    <property type="protein sequence ID" value="AT5G39900.1"/>
    <property type="gene ID" value="AT5G39900"/>
</dbReference>
<dbReference type="KEGG" id="ath:AT5G39900"/>
<dbReference type="Araport" id="AT5G39900"/>
<dbReference type="TAIR" id="AT5G39900"/>
<dbReference type="eggNOG" id="KOG0462">
    <property type="taxonomic scope" value="Eukaryota"/>
</dbReference>
<dbReference type="HOGENOM" id="CLU_009995_3_3_1"/>
<dbReference type="InParanoid" id="Q9FLE4"/>
<dbReference type="OMA" id="HADVFHQ"/>
<dbReference type="OrthoDB" id="1074at2759"/>
<dbReference type="PhylomeDB" id="Q9FLE4"/>
<dbReference type="PRO" id="PR:Q9FLE4"/>
<dbReference type="Proteomes" id="UP000006548">
    <property type="component" value="Chromosome 5"/>
</dbReference>
<dbReference type="ExpressionAtlas" id="Q9FLE4">
    <property type="expression patterns" value="baseline and differential"/>
</dbReference>
<dbReference type="GO" id="GO:0005743">
    <property type="term" value="C:mitochondrial inner membrane"/>
    <property type="evidence" value="ECO:0007669"/>
    <property type="project" value="UniProtKB-SubCell"/>
</dbReference>
<dbReference type="GO" id="GO:0005759">
    <property type="term" value="C:mitochondrial matrix"/>
    <property type="evidence" value="ECO:0007669"/>
    <property type="project" value="UniProtKB-UniRule"/>
</dbReference>
<dbReference type="GO" id="GO:0005525">
    <property type="term" value="F:GTP binding"/>
    <property type="evidence" value="ECO:0007669"/>
    <property type="project" value="UniProtKB-UniRule"/>
</dbReference>
<dbReference type="GO" id="GO:0003924">
    <property type="term" value="F:GTPase activity"/>
    <property type="evidence" value="ECO:0007669"/>
    <property type="project" value="UniProtKB-UniRule"/>
</dbReference>
<dbReference type="GO" id="GO:0043022">
    <property type="term" value="F:ribosome binding"/>
    <property type="evidence" value="ECO:0007669"/>
    <property type="project" value="UniProtKB-UniRule"/>
</dbReference>
<dbReference type="GO" id="GO:0045727">
    <property type="term" value="P:positive regulation of translation"/>
    <property type="evidence" value="ECO:0007669"/>
    <property type="project" value="UniProtKB-UniRule"/>
</dbReference>
<dbReference type="GO" id="GO:0006412">
    <property type="term" value="P:translation"/>
    <property type="evidence" value="ECO:0007669"/>
    <property type="project" value="UniProtKB-KW"/>
</dbReference>
<dbReference type="CDD" id="cd03699">
    <property type="entry name" value="EF4_II"/>
    <property type="match status" value="1"/>
</dbReference>
<dbReference type="CDD" id="cd16260">
    <property type="entry name" value="EF4_III"/>
    <property type="match status" value="1"/>
</dbReference>
<dbReference type="CDD" id="cd01890">
    <property type="entry name" value="LepA"/>
    <property type="match status" value="1"/>
</dbReference>
<dbReference type="CDD" id="cd03709">
    <property type="entry name" value="lepA_C"/>
    <property type="match status" value="1"/>
</dbReference>
<dbReference type="FunFam" id="3.40.50.300:FF:000078">
    <property type="entry name" value="Elongation factor 4"/>
    <property type="match status" value="1"/>
</dbReference>
<dbReference type="FunFam" id="2.40.30.10:FF:000015">
    <property type="entry name" value="Translation factor GUF1, mitochondrial"/>
    <property type="match status" value="1"/>
</dbReference>
<dbReference type="FunFam" id="3.30.70.240:FF:000007">
    <property type="entry name" value="Translation factor GUF1, mitochondrial"/>
    <property type="match status" value="1"/>
</dbReference>
<dbReference type="FunFam" id="3.30.70.2570:FF:000001">
    <property type="entry name" value="Translation factor GUF1, mitochondrial"/>
    <property type="match status" value="1"/>
</dbReference>
<dbReference type="FunFam" id="3.30.70.870:FF:000004">
    <property type="entry name" value="Translation factor GUF1, mitochondrial"/>
    <property type="match status" value="1"/>
</dbReference>
<dbReference type="Gene3D" id="3.30.70.240">
    <property type="match status" value="1"/>
</dbReference>
<dbReference type="Gene3D" id="3.30.70.2570">
    <property type="entry name" value="Elongation factor 4, C-terminal domain"/>
    <property type="match status" value="1"/>
</dbReference>
<dbReference type="Gene3D" id="3.30.70.870">
    <property type="entry name" value="Elongation Factor G (Translational Gtpase), domain 3"/>
    <property type="match status" value="1"/>
</dbReference>
<dbReference type="Gene3D" id="3.40.50.300">
    <property type="entry name" value="P-loop containing nucleotide triphosphate hydrolases"/>
    <property type="match status" value="1"/>
</dbReference>
<dbReference type="Gene3D" id="2.40.30.10">
    <property type="entry name" value="Translation factors"/>
    <property type="match status" value="1"/>
</dbReference>
<dbReference type="HAMAP" id="MF_00071">
    <property type="entry name" value="LepA"/>
    <property type="match status" value="1"/>
</dbReference>
<dbReference type="InterPro" id="IPR006297">
    <property type="entry name" value="EF-4"/>
</dbReference>
<dbReference type="InterPro" id="IPR035647">
    <property type="entry name" value="EFG_III/V"/>
</dbReference>
<dbReference type="InterPro" id="IPR000640">
    <property type="entry name" value="EFG_V-like"/>
</dbReference>
<dbReference type="InterPro" id="IPR004161">
    <property type="entry name" value="EFTu-like_2"/>
</dbReference>
<dbReference type="InterPro" id="IPR031157">
    <property type="entry name" value="G_TR_CS"/>
</dbReference>
<dbReference type="InterPro" id="IPR038363">
    <property type="entry name" value="LepA_C_sf"/>
</dbReference>
<dbReference type="InterPro" id="IPR013842">
    <property type="entry name" value="LepA_CTD"/>
</dbReference>
<dbReference type="InterPro" id="IPR035654">
    <property type="entry name" value="LepA_IV"/>
</dbReference>
<dbReference type="InterPro" id="IPR027417">
    <property type="entry name" value="P-loop_NTPase"/>
</dbReference>
<dbReference type="InterPro" id="IPR005225">
    <property type="entry name" value="Small_GTP-bd"/>
</dbReference>
<dbReference type="InterPro" id="IPR000795">
    <property type="entry name" value="T_Tr_GTP-bd_dom"/>
</dbReference>
<dbReference type="InterPro" id="IPR009000">
    <property type="entry name" value="Transl_B-barrel_sf"/>
</dbReference>
<dbReference type="NCBIfam" id="TIGR01393">
    <property type="entry name" value="lepA"/>
    <property type="match status" value="1"/>
</dbReference>
<dbReference type="NCBIfam" id="TIGR00231">
    <property type="entry name" value="small_GTP"/>
    <property type="match status" value="1"/>
</dbReference>
<dbReference type="PANTHER" id="PTHR43512:SF7">
    <property type="entry name" value="TRANSLATION FACTOR GUF1, MITOCHONDRIAL"/>
    <property type="match status" value="1"/>
</dbReference>
<dbReference type="PANTHER" id="PTHR43512">
    <property type="entry name" value="TRANSLATION FACTOR GUF1-RELATED"/>
    <property type="match status" value="1"/>
</dbReference>
<dbReference type="Pfam" id="PF00679">
    <property type="entry name" value="EFG_C"/>
    <property type="match status" value="1"/>
</dbReference>
<dbReference type="Pfam" id="PF00009">
    <property type="entry name" value="GTP_EFTU"/>
    <property type="match status" value="1"/>
</dbReference>
<dbReference type="Pfam" id="PF03144">
    <property type="entry name" value="GTP_EFTU_D2"/>
    <property type="match status" value="1"/>
</dbReference>
<dbReference type="Pfam" id="PF06421">
    <property type="entry name" value="LepA_C"/>
    <property type="match status" value="1"/>
</dbReference>
<dbReference type="PRINTS" id="PR00315">
    <property type="entry name" value="ELONGATNFCT"/>
</dbReference>
<dbReference type="SUPFAM" id="SSF54980">
    <property type="entry name" value="EF-G C-terminal domain-like"/>
    <property type="match status" value="2"/>
</dbReference>
<dbReference type="SUPFAM" id="SSF52540">
    <property type="entry name" value="P-loop containing nucleoside triphosphate hydrolases"/>
    <property type="match status" value="1"/>
</dbReference>
<dbReference type="SUPFAM" id="SSF50447">
    <property type="entry name" value="Translation proteins"/>
    <property type="match status" value="1"/>
</dbReference>
<dbReference type="PROSITE" id="PS00301">
    <property type="entry name" value="G_TR_1"/>
    <property type="match status" value="1"/>
</dbReference>
<dbReference type="PROSITE" id="PS51722">
    <property type="entry name" value="G_TR_2"/>
    <property type="match status" value="1"/>
</dbReference>
<protein>
    <recommendedName>
        <fullName evidence="1">Translation factor GUF1 homolog, mitochondrial</fullName>
        <ecNumber>3.6.5.-</ecNumber>
    </recommendedName>
    <alternativeName>
        <fullName evidence="1">Elongation factor 4 homolog</fullName>
        <shortName evidence="1">EF-4</shortName>
    </alternativeName>
    <alternativeName>
        <fullName evidence="1">GTPase GUF1 homolog</fullName>
    </alternativeName>
    <alternativeName>
        <fullName evidence="1">Ribosomal back-translocase</fullName>
    </alternativeName>
</protein>
<sequence>MGSMYRASKTLKSSRQALSILFNSLNSNRQNPTCIGLYQAYGFSSDSRQSSKEPTIDLTKFPSEKIRNFSIIAHIDHGKSTLADRLMELTGTIKKGHGQPQYLDKLQVERERGITVKAQTATMFYENKVEDQEASGYLLNLIDTPGHVDFSYEVSRSLSACQGALLVVDAAQGVQAQTVANFYLAFEANLTIVPVINKIDQPTADPERVKAQLKSMFDLDTEDVLLVSAKTGLGLEHVLPAVIERIPPPPGISESPLRMLLFDSFFNEYKGVICYVSVVDGMLSKGDKVSFAASGQSYEVLDVGIMHPELTSTGMLLTGQVGYIVTGMRTTKEARIGDTIYRTKTTVEPLPGFKPVRHMVFSGVYPADGSDFEALGHAMEKLTCNDASVSVAKETSTALGMGFRCGFLGLLHMDVFHQRLEQEYGTQVISTIPTVPYTFEYSDGSKLQVQNPAALPSNPKYRVTASWEPTVIATIILPSEYVGAVINLCSDRRGQQLEYTFIDAQRVFLKYQLPLREIVVDFYDELKSITSGYASFDYEDAEYQASDLVKLDILLNGQAVDALATIVHKQKAYRVGKELVEKLKNYIERQMFEVMIQAAIGSKIIARDTISAMRKNVLAKCYGGDITRKKKLLEKQKEGKKRMKRVGSVDIPHEAFQQILKVS</sequence>